<organism>
    <name type="scientific">Pan troglodytes</name>
    <name type="common">Chimpanzee</name>
    <dbReference type="NCBI Taxonomy" id="9598"/>
    <lineage>
        <taxon>Eukaryota</taxon>
        <taxon>Metazoa</taxon>
        <taxon>Chordata</taxon>
        <taxon>Craniata</taxon>
        <taxon>Vertebrata</taxon>
        <taxon>Euteleostomi</taxon>
        <taxon>Mammalia</taxon>
        <taxon>Eutheria</taxon>
        <taxon>Euarchontoglires</taxon>
        <taxon>Primates</taxon>
        <taxon>Haplorrhini</taxon>
        <taxon>Catarrhini</taxon>
        <taxon>Hominidae</taxon>
        <taxon>Pan</taxon>
    </lineage>
</organism>
<feature type="signal peptide" evidence="3">
    <location>
        <begin position="1"/>
        <end position="22"/>
    </location>
</feature>
<feature type="chain" id="PRO_0000344443" description="Major histocompatibility complex class I-related protein 1">
    <location>
        <begin position="23"/>
        <end position="341"/>
    </location>
</feature>
<feature type="topological domain" description="Extracellular" evidence="3">
    <location>
        <begin position="23"/>
        <end position="302"/>
    </location>
</feature>
<feature type="transmembrane region" description="Helical" evidence="3">
    <location>
        <begin position="303"/>
        <end position="323"/>
    </location>
</feature>
<feature type="topological domain" description="Cytoplasmic" evidence="3">
    <location>
        <begin position="324"/>
        <end position="341"/>
    </location>
</feature>
<feature type="domain" description="Ig-like C1-type" evidence="4">
    <location>
        <begin position="203"/>
        <end position="299"/>
    </location>
</feature>
<feature type="region of interest" description="Antigen-binding cleft" evidence="2">
    <location>
        <begin position="23"/>
        <end position="201"/>
    </location>
</feature>
<feature type="region of interest" description="Alpha-1" evidence="3">
    <location>
        <begin position="23"/>
        <end position="109"/>
    </location>
</feature>
<feature type="region of interest" description="Alpha-2" evidence="3">
    <location>
        <begin position="110"/>
        <end position="201"/>
    </location>
</feature>
<feature type="region of interest" description="Alpha-3" evidence="3">
    <location>
        <begin position="202"/>
        <end position="293"/>
    </location>
</feature>
<feature type="region of interest" description="Connecting peptide" evidence="3">
    <location>
        <begin position="294"/>
        <end position="302"/>
    </location>
</feature>
<feature type="binding site" evidence="2">
    <location>
        <position position="29"/>
    </location>
    <ligand>
        <name>8-(9H-purin-6-yl)-2-oxa-8-azabicyclo[3.3.1]nona-3,6-diene-4,6-dicarbaldehyde</name>
        <dbReference type="ChEBI" id="CHEBI:233180"/>
    </ligand>
</feature>
<feature type="binding site" evidence="2">
    <location>
        <position position="31"/>
    </location>
    <ligand>
        <name>5-(2-oxoethylideneamino)-6-(D-ribitylamino)uracil</name>
        <dbReference type="ChEBI" id="CHEBI:78397"/>
        <note>pathogen-derived metabolite antigen</note>
    </ligand>
</feature>
<feature type="binding site" evidence="2">
    <location>
        <position position="31"/>
    </location>
    <ligand>
        <name>5-(2-oxopropylideneamino)-6-(D-ribitylamino)uracil</name>
        <dbReference type="ChEBI" id="CHEBI:78398"/>
        <note>pathogen-derived metabolite antigen</note>
    </ligand>
</feature>
<feature type="binding site" evidence="2">
    <location>
        <position position="31"/>
    </location>
    <ligand>
        <name>7-hydroxy-6-methyl-8-(1-D-ribityl)lumazine</name>
        <dbReference type="ChEBI" id="CHEBI:233481"/>
        <note>pathogen-derived metabolite antigen</note>
    </ligand>
</feature>
<feature type="binding site" evidence="2">
    <location>
        <position position="31"/>
    </location>
    <ligand>
        <name>8-(9H-purin-6-yl)-2-oxa-8-azabicyclo[3.3.1]nona-3,6-diene-4,6-dicarbaldehyde</name>
        <dbReference type="ChEBI" id="CHEBI:233180"/>
    </ligand>
</feature>
<feature type="binding site" evidence="2">
    <location>
        <position position="46"/>
    </location>
    <ligand>
        <name>5-(2-oxoethylideneamino)-6-(D-ribitylamino)uracil</name>
        <dbReference type="ChEBI" id="CHEBI:78397"/>
        <note>pathogen-derived metabolite antigen</note>
    </ligand>
</feature>
<feature type="binding site" evidence="2">
    <location>
        <position position="46"/>
    </location>
    <ligand>
        <name>5-(2-oxopropylideneamino)-6-(D-ribitylamino)uracil</name>
        <dbReference type="ChEBI" id="CHEBI:78398"/>
        <note>pathogen-derived metabolite antigen</note>
    </ligand>
</feature>
<feature type="binding site" evidence="2">
    <location>
        <position position="46"/>
    </location>
    <ligand>
        <name>7-hydroxy-6-methyl-8-(1-D-ribityl)lumazine</name>
        <dbReference type="ChEBI" id="CHEBI:233481"/>
        <note>pathogen-derived metabolite antigen</note>
    </ligand>
</feature>
<feature type="binding site" description="covalent" evidence="2">
    <location>
        <position position="65"/>
    </location>
    <ligand>
        <name>2-amino-4-oxopteridine-6-carbaldehyde</name>
        <dbReference type="ChEBI" id="CHEBI:70981"/>
    </ligand>
</feature>
<feature type="binding site" description="covalent" evidence="2">
    <location>
        <position position="65"/>
    </location>
    <ligand>
        <name>5-(2-oxoethylideneamino)-6-(D-ribitylamino)uracil</name>
        <dbReference type="ChEBI" id="CHEBI:78397"/>
        <note>pathogen-derived metabolite antigen</note>
    </ligand>
</feature>
<feature type="binding site" description="covalent" evidence="2">
    <location>
        <position position="65"/>
    </location>
    <ligand>
        <name>5-(2-oxopropylideneamino)-6-(D-ribitylamino)uracil</name>
        <dbReference type="ChEBI" id="CHEBI:78398"/>
        <note>pathogen-derived metabolite antigen</note>
    </ligand>
</feature>
<feature type="binding site" evidence="2">
    <location>
        <position position="65"/>
    </location>
    <ligand>
        <name>7-hydroxy-6-methyl-8-(1-D-ribityl)lumazine</name>
        <dbReference type="ChEBI" id="CHEBI:233481"/>
        <note>pathogen-derived metabolite antigen</note>
    </ligand>
</feature>
<feature type="binding site" description="covalent" evidence="2">
    <location>
        <position position="65"/>
    </location>
    <ligand>
        <name>8-(9H-purin-6-yl)-2-oxa-8-azabicyclo[3.3.1]nona-3,6-diene-4,6-dicarbaldehyde</name>
        <dbReference type="ChEBI" id="CHEBI:233180"/>
    </ligand>
</feature>
<feature type="binding site" description="covalent" evidence="2">
    <location>
        <position position="65"/>
    </location>
    <ligand>
        <name>pyridoxal</name>
        <dbReference type="ChEBI" id="CHEBI:17310"/>
    </ligand>
</feature>
<feature type="binding site" evidence="2">
    <location>
        <position position="80"/>
    </location>
    <ligand>
        <name>8-(9H-purin-6-yl)-2-oxa-8-azabicyclo[3.3.1]nona-3,6-diene-4,6-dicarbaldehyde</name>
        <dbReference type="ChEBI" id="CHEBI:233180"/>
    </ligand>
</feature>
<feature type="binding site" evidence="2">
    <location>
        <position position="116"/>
    </location>
    <ligand>
        <name>5-(2-oxoethylideneamino)-6-(D-ribitylamino)uracil</name>
        <dbReference type="ChEBI" id="CHEBI:78397"/>
        <note>pathogen-derived metabolite antigen</note>
    </ligand>
</feature>
<feature type="binding site" evidence="2">
    <location>
        <position position="116"/>
    </location>
    <ligand>
        <name>5-(2-oxopropylideneamino)-6-(D-ribitylamino)uracil</name>
        <dbReference type="ChEBI" id="CHEBI:78398"/>
        <note>pathogen-derived metabolite antigen</note>
    </ligand>
</feature>
<feature type="binding site" evidence="2">
    <location>
        <position position="116"/>
    </location>
    <ligand>
        <name>7-hydroxy-6-methyl-8-(1-D-ribityl)lumazine</name>
        <dbReference type="ChEBI" id="CHEBI:233481"/>
        <note>pathogen-derived metabolite antigen</note>
    </ligand>
</feature>
<feature type="binding site" evidence="2">
    <location>
        <position position="116"/>
    </location>
    <ligand>
        <name>8-(9H-purin-6-yl)-2-oxa-8-azabicyclo[3.3.1]nona-3,6-diene-4,6-dicarbaldehyde</name>
        <dbReference type="ChEBI" id="CHEBI:233180"/>
    </ligand>
</feature>
<feature type="binding site" evidence="2">
    <location>
        <position position="174"/>
    </location>
    <ligand>
        <name>5-(2-oxoethylideneamino)-6-(D-ribitylamino)uracil</name>
        <dbReference type="ChEBI" id="CHEBI:78397"/>
        <note>pathogen-derived metabolite antigen</note>
    </ligand>
</feature>
<feature type="binding site" evidence="2">
    <location>
        <position position="174"/>
    </location>
    <ligand>
        <name>5-(2-oxopropylideneamino)-6-(D-ribitylamino)uracil</name>
        <dbReference type="ChEBI" id="CHEBI:78398"/>
        <note>pathogen-derived metabolite antigen</note>
    </ligand>
</feature>
<feature type="binding site" evidence="2">
    <location>
        <position position="174"/>
    </location>
    <ligand>
        <name>7-hydroxy-6-methyl-8-(1-D-ribityl)lumazine</name>
        <dbReference type="ChEBI" id="CHEBI:233481"/>
        <note>pathogen-derived metabolite antigen</note>
    </ligand>
</feature>
<feature type="binding site" evidence="2">
    <location>
        <position position="175"/>
    </location>
    <ligand>
        <name>5-(2-oxoethylideneamino)-6-(D-ribitylamino)uracil</name>
        <dbReference type="ChEBI" id="CHEBI:78397"/>
        <note>pathogen-derived metabolite antigen</note>
    </ligand>
</feature>
<feature type="binding site" evidence="2">
    <location>
        <position position="175"/>
    </location>
    <ligand>
        <name>5-(2-oxopropylideneamino)-6-(D-ribitylamino)uracil</name>
        <dbReference type="ChEBI" id="CHEBI:78398"/>
        <note>pathogen-derived metabolite antigen</note>
    </ligand>
</feature>
<feature type="binding site" evidence="2">
    <location>
        <position position="175"/>
    </location>
    <ligand>
        <name>7-hydroxy-6-methyl-8-(1-D-ribityl)lumazine</name>
        <dbReference type="ChEBI" id="CHEBI:233481"/>
        <note>pathogen-derived metabolite antigen</note>
    </ligand>
</feature>
<feature type="glycosylation site" description="N-linked (GlcNAc...) asparagine" evidence="3">
    <location>
        <position position="107"/>
    </location>
</feature>
<feature type="disulfide bond" evidence="4">
    <location>
        <begin position="120"/>
        <end position="183"/>
    </location>
</feature>
<feature type="disulfide bond" evidence="4">
    <location>
        <begin position="222"/>
        <end position="278"/>
    </location>
</feature>
<feature type="splice variant" id="VSP_034760" description="In isoform 2." evidence="6">
    <location>
        <begin position="203"/>
        <end position="294"/>
    </location>
</feature>
<feature type="sequence variant" id="VAR_045611" evidence="5">
    <original>I</original>
    <variation>T</variation>
    <location>
        <position position="197"/>
    </location>
</feature>
<keyword id="KW-0025">Alternative splicing</keyword>
<keyword id="KW-1003">Cell membrane</keyword>
<keyword id="KW-1015">Disulfide bond</keyword>
<keyword id="KW-0256">Endoplasmic reticulum</keyword>
<keyword id="KW-0967">Endosome</keyword>
<keyword id="KW-0325">Glycoprotein</keyword>
<keyword id="KW-0333">Golgi apparatus</keyword>
<keyword id="KW-0391">Immunity</keyword>
<keyword id="KW-0393">Immunoglobulin domain</keyword>
<keyword id="KW-0399">Innate immunity</keyword>
<keyword id="KW-0472">Membrane</keyword>
<keyword id="KW-0490">MHC I</keyword>
<keyword id="KW-1185">Reference proteome</keyword>
<keyword id="KW-0732">Signal</keyword>
<keyword id="KW-0812">Transmembrane</keyword>
<keyword id="KW-1133">Transmembrane helix</keyword>
<name>HMR1_PANTR</name>
<sequence length="341" mass="39394">MGELMAFLLPLIIVLMVKHSDSRTHSLRYFRLGVSDPIHGVPEFISVGYVDSHPITTYDSVTRQKEPRAPWMAENLAPDHWERYTQLLRGWQQMFKVELKRLQRHYNHSGSHTYQRMIGCELLEDGSTTGFLQYAYDGQDFLIFNKDTLSWLAVDNVAHTIKQAWEANQHELLYQKNWLEEECIAWLKRFLEYGKDILQRTEPPLVRVNRKETFPGVTALFCKAHGFYPPEIYMTWMKNGEEIVQEIDYGDILPSGDGTYQTWASVELDPQSSNLYSCHVEHCGVHMVLQVPQESETIPLVMKAVSGSIVLVIVLAGVGVLVWRRRPREQNGAIYLPTPDR</sequence>
<dbReference type="EMBL" id="AJ275982">
    <property type="protein sequence ID" value="CAC34274.1"/>
    <property type="molecule type" value="mRNA"/>
</dbReference>
<dbReference type="EMBL" id="AJ275983">
    <property type="protein sequence ID" value="CAC34275.1"/>
    <property type="molecule type" value="mRNA"/>
</dbReference>
<dbReference type="EMBL" id="AJ275984">
    <property type="protein sequence ID" value="CAC34272.1"/>
    <property type="molecule type" value="mRNA"/>
</dbReference>
<dbReference type="EMBL" id="AJ275985">
    <property type="protein sequence ID" value="CAC34273.1"/>
    <property type="molecule type" value="mRNA"/>
</dbReference>
<dbReference type="RefSeq" id="NP_001065258.1">
    <molecule id="Q9BCU3-2"/>
    <property type="nucleotide sequence ID" value="NM_001071790.1"/>
</dbReference>
<dbReference type="SMR" id="Q9BCU3"/>
<dbReference type="STRING" id="9598.ENSPTRP00000090456"/>
<dbReference type="GlyCosmos" id="Q9BCU3">
    <property type="glycosylation" value="1 site, No reported glycans"/>
</dbReference>
<dbReference type="PaxDb" id="9598-ENSPTRP00000002915"/>
<dbReference type="GeneID" id="457562"/>
<dbReference type="KEGG" id="ptr:457562"/>
<dbReference type="CTD" id="3140"/>
<dbReference type="eggNOG" id="ENOG502RQEK">
    <property type="taxonomic scope" value="Eukaryota"/>
</dbReference>
<dbReference type="InParanoid" id="Q9BCU3"/>
<dbReference type="Proteomes" id="UP000002277">
    <property type="component" value="Unplaced"/>
</dbReference>
<dbReference type="GO" id="GO:0031901">
    <property type="term" value="C:early endosome membrane"/>
    <property type="evidence" value="ECO:0007669"/>
    <property type="project" value="UniProtKB-SubCell"/>
</dbReference>
<dbReference type="GO" id="GO:0005789">
    <property type="term" value="C:endoplasmic reticulum membrane"/>
    <property type="evidence" value="ECO:0007669"/>
    <property type="project" value="UniProtKB-SubCell"/>
</dbReference>
<dbReference type="GO" id="GO:0009897">
    <property type="term" value="C:external side of plasma membrane"/>
    <property type="evidence" value="ECO:0000318"/>
    <property type="project" value="GO_Central"/>
</dbReference>
<dbReference type="GO" id="GO:0005615">
    <property type="term" value="C:extracellular space"/>
    <property type="evidence" value="ECO:0000318"/>
    <property type="project" value="GO_Central"/>
</dbReference>
<dbReference type="GO" id="GO:0000139">
    <property type="term" value="C:Golgi membrane"/>
    <property type="evidence" value="ECO:0007669"/>
    <property type="project" value="UniProtKB-SubCell"/>
</dbReference>
<dbReference type="GO" id="GO:0031902">
    <property type="term" value="C:late endosome membrane"/>
    <property type="evidence" value="ECO:0007669"/>
    <property type="project" value="UniProtKB-SubCell"/>
</dbReference>
<dbReference type="GO" id="GO:0042612">
    <property type="term" value="C:MHC class I protein complex"/>
    <property type="evidence" value="ECO:0007669"/>
    <property type="project" value="UniProtKB-KW"/>
</dbReference>
<dbReference type="GO" id="GO:0002474">
    <property type="term" value="P:antigen processing and presentation of peptide antigen via MHC class I"/>
    <property type="evidence" value="ECO:0007669"/>
    <property type="project" value="UniProtKB-KW"/>
</dbReference>
<dbReference type="GO" id="GO:0006955">
    <property type="term" value="P:immune response"/>
    <property type="evidence" value="ECO:0000318"/>
    <property type="project" value="GO_Central"/>
</dbReference>
<dbReference type="GO" id="GO:0045087">
    <property type="term" value="P:innate immune response"/>
    <property type="evidence" value="ECO:0007669"/>
    <property type="project" value="UniProtKB-KW"/>
</dbReference>
<dbReference type="CDD" id="cd07698">
    <property type="entry name" value="IgC1_MHC_I_alpha3"/>
    <property type="match status" value="1"/>
</dbReference>
<dbReference type="FunFam" id="3.30.500.10:FF:000001">
    <property type="entry name" value="H-2 class I histocompatibility antigen, alpha chain"/>
    <property type="match status" value="1"/>
</dbReference>
<dbReference type="FunFam" id="2.60.40.10:FF:000204">
    <property type="entry name" value="Major histocompatibility complex, class I-related protein"/>
    <property type="match status" value="1"/>
</dbReference>
<dbReference type="Gene3D" id="2.60.40.10">
    <property type="entry name" value="Immunoglobulins"/>
    <property type="match status" value="1"/>
</dbReference>
<dbReference type="Gene3D" id="3.30.500.10">
    <property type="entry name" value="MHC class I-like antigen recognition-like"/>
    <property type="match status" value="1"/>
</dbReference>
<dbReference type="InterPro" id="IPR007110">
    <property type="entry name" value="Ig-like_dom"/>
</dbReference>
<dbReference type="InterPro" id="IPR036179">
    <property type="entry name" value="Ig-like_dom_sf"/>
</dbReference>
<dbReference type="InterPro" id="IPR013783">
    <property type="entry name" value="Ig-like_fold"/>
</dbReference>
<dbReference type="InterPro" id="IPR003006">
    <property type="entry name" value="Ig/MHC_CS"/>
</dbReference>
<dbReference type="InterPro" id="IPR003597">
    <property type="entry name" value="Ig_C1-set"/>
</dbReference>
<dbReference type="InterPro" id="IPR050208">
    <property type="entry name" value="MHC_class-I_related"/>
</dbReference>
<dbReference type="InterPro" id="IPR011161">
    <property type="entry name" value="MHC_I-like_Ag-recog"/>
</dbReference>
<dbReference type="InterPro" id="IPR037055">
    <property type="entry name" value="MHC_I-like_Ag-recog_sf"/>
</dbReference>
<dbReference type="InterPro" id="IPR011162">
    <property type="entry name" value="MHC_I/II-like_Ag-recog"/>
</dbReference>
<dbReference type="InterPro" id="IPR001039">
    <property type="entry name" value="MHC_I_a_a1/a2"/>
</dbReference>
<dbReference type="PANTHER" id="PTHR16675:SF242">
    <property type="entry name" value="MAJOR HISTOCOMPATIBILITY COMPLEX CLASS I-RELATED GENE PROTEIN"/>
    <property type="match status" value="1"/>
</dbReference>
<dbReference type="PANTHER" id="PTHR16675">
    <property type="entry name" value="MHC CLASS I-RELATED"/>
    <property type="match status" value="1"/>
</dbReference>
<dbReference type="Pfam" id="PF07654">
    <property type="entry name" value="C1-set"/>
    <property type="match status" value="1"/>
</dbReference>
<dbReference type="Pfam" id="PF00129">
    <property type="entry name" value="MHC_I"/>
    <property type="match status" value="1"/>
</dbReference>
<dbReference type="PRINTS" id="PR01638">
    <property type="entry name" value="MHCCLASSI"/>
</dbReference>
<dbReference type="SMART" id="SM00407">
    <property type="entry name" value="IGc1"/>
    <property type="match status" value="1"/>
</dbReference>
<dbReference type="SUPFAM" id="SSF48726">
    <property type="entry name" value="Immunoglobulin"/>
    <property type="match status" value="1"/>
</dbReference>
<dbReference type="SUPFAM" id="SSF54452">
    <property type="entry name" value="MHC antigen-recognition domain"/>
    <property type="match status" value="1"/>
</dbReference>
<dbReference type="PROSITE" id="PS50835">
    <property type="entry name" value="IG_LIKE"/>
    <property type="match status" value="1"/>
</dbReference>
<dbReference type="PROSITE" id="PS00290">
    <property type="entry name" value="IG_MHC"/>
    <property type="match status" value="1"/>
</dbReference>
<reference key="1">
    <citation type="journal article" date="2001" name="Immunogenetics">
        <title>Characterization of the MHC class I-related MR1 locus in nonhuman primates.</title>
        <authorList>
            <person name="Parra-Cuadrado J.F."/>
            <person name="del Moral M.G."/>
            <person name="Garcia-Pavia P."/>
            <person name="Setien F."/>
            <person name="Martinez-Naves E."/>
        </authorList>
    </citation>
    <scope>NUCLEOTIDE SEQUENCE [MRNA] (ISOFORMS 1 AND 2)</scope>
    <scope>ALTERNATIVE SPLICING</scope>
    <scope>VARIANT THR-197</scope>
</reference>
<proteinExistence type="evidence at transcript level"/>
<comment type="function">
    <text evidence="2">Antigen-presenting molecule specialized in displaying microbial pyrimidine-based metabolites to alpha-beta T cell receptors (TCR) on innate-type mucosal-associated invariant T (MAIT) cells. In complex with B2M preferentially presents riboflavin-derived metabolites to semi-invariant TCRs on MAIT cells, guiding immune surveillance of the microbial metabolome at mucosal epithelial barriers. Signature pyrimidine-based microbial antigens are generated via non-enzymatic condensation of metabolite intermediates of the riboflavin pathway with by-products arising from other metabolic pathways such as glycolysis. Typical potent antigenic metabolites are 5-(2-oxoethylideneamino)-6-D-ribitylaminouracil (5-OE-RU) and 5-(2-oxopropylideneamino)-6-D-ribitylaminouracil (5-OP-RU), products of condensation of 5-amino-6-D-ribityaminouracil (5-A-RU) with glyoxal or methylglyoxal by-products, respectively. May present microbial antigens to various MAIT cell subsets, providing for unique recognition of diverse microbes, including pathogens that do not synthesize riboflavin. Upon antigen recognition, elicits rapid innate-type MAIT cell activation to eliminate pathogenic microbes by directly killing infected cells. During T cell development, drives thymic selection and post-thymic terminal differentiation of MAIT cells in a process dependent on commensal microflora. Acts as an immune sensor of cancer cell metabolome. May present a tumor-specific or -associated metabolite essential for cancer cell survival to a pan-cancer TCR on a non-MAIT CD8-positive T cell clone, triggering T cell-mediated killing of a wide range of cancer cell types. May present tumor-enriched pyridoxal and pyridoxal 5'-phosphate antigens, enabling preferential recognition of cancer cells. Presents nucleobase carbonyl adducts generated during oxidative stress. Captures M3Ade, a nucleobase adduct composed of one adenine modified by a malondialdehyde trimer, for recognition by MR1-restricted T cell clones expressing a polyclonal TCR repertoire.</text>
</comment>
<comment type="subunit">
    <text evidence="1 2">Heterotrimer that consists of MR1, B2M and metabolite antigen. Major classes of metabolite ligands presented by MR1 include riboflavin-related antigens, pyrimidines and ribityl lumazines, nucleobase adducts and folate derivatives. Forms reversible covalent Schiff base complexes with microbial pyrimidine-based metabolite, which serves as a molecular switch triggering complete folding, stable association with B2M and translocation of the ternary complex from endoplasmic reticulum to the plasma membrane. Alternatively, forms non-Schiff base complexes with ribityl lumazines. On antigen-presenting cells, the ternary complex interacts with TCR on MR1-restricted T cells. Interacts with TAPBP and TAPBPL chaperones in the endoplasmic reticulum. TAPBP associated or not with MHC class I peptide loading complex binds ligand-free MR1 or MR1-B2M complex, providing for stable MR1 pools ready for metabolite antigen processing. TAPBPL interacts with MR1 in a ligand-independent way; this interaction may stabilize MR1 pool and facilitate ligand loading and dissociation. Structurally, MR1-B2M heterodimer adopts a topology similar to classical MHC class I molecules, with alpha-1 and alpha-2 domains of MR1 forming the antigen-binding cleft composed of two alpha-helices resting on a floor of 7-stranded anti-parallel beta-pleated sheet (By similarity). MR1-B2M heterodimer (via alpha-helices) interacts with TCR (via CDR domains) (By similarity).</text>
</comment>
<comment type="subcellular location">
    <subcellularLocation>
        <location evidence="1">Cell membrane</location>
        <topology evidence="2">Single-pass type I membrane protein</topology>
    </subcellularLocation>
    <subcellularLocation>
        <location evidence="2">Endoplasmic reticulum membrane</location>
        <topology evidence="3">Single-pass type I membrane protein</topology>
    </subcellularLocation>
    <subcellularLocation>
        <location evidence="2">Golgi apparatus membrane</location>
        <topology evidence="3">Single-pass type I membrane protein</topology>
    </subcellularLocation>
    <subcellularLocation>
        <location evidence="2">Early endosome membrane</location>
        <topology evidence="3">Single-pass type I membrane protein</topology>
    </subcellularLocation>
    <subcellularLocation>
        <location evidence="2">Late endosome membrane</location>
        <topology evidence="3">Single-pass type I membrane protein</topology>
    </subcellularLocation>
    <text evidence="2">In the absence of antigen remains within the endoplasmic reticulum where it acts as a metabolite sensor. Antigen binding triggers trafficking of the ternary complex to the plasma membrane. After presentation, most of these complexes are rapidly internalized and degraded via endocytosis. A small subset recycles via endosomes back to the plasma membrane and may thus acquire and present new antigens that do not efficiently reach the endoplasmic reticulum.</text>
</comment>
<comment type="alternative products">
    <event type="alternative splicing"/>
    <isoform>
        <id>Q9BCU3-1</id>
        <name>1</name>
        <name>MR1B1</name>
        <sequence type="displayed"/>
    </isoform>
    <isoform>
        <id>Q9BCU3-2</id>
        <name>2</name>
        <name>MR1B2</name>
        <sequence type="described" ref="VSP_034760"/>
    </isoform>
</comment>
<comment type="domain">
    <text evidence="2">The alpha-1 domain is a structural part of antigen-binding cleft.</text>
</comment>
<comment type="domain">
    <text evidence="2">The alpha-2 domain is a structural part of antigen-binding cleft.</text>
</comment>
<comment type="PTM">
    <text evidence="2">N-glycosylated.</text>
</comment>
<comment type="similarity">
    <text evidence="7">Belongs to the MHC class I family.</text>
</comment>
<gene>
    <name evidence="6" type="primary">MR1</name>
</gene>
<evidence type="ECO:0000250" key="1">
    <source>
        <dbReference type="UniProtKB" id="C1ITJ8"/>
    </source>
</evidence>
<evidence type="ECO:0000250" key="2">
    <source>
        <dbReference type="UniProtKB" id="Q95460"/>
    </source>
</evidence>
<evidence type="ECO:0000255" key="3"/>
<evidence type="ECO:0000255" key="4">
    <source>
        <dbReference type="PROSITE-ProRule" id="PRU00114"/>
    </source>
</evidence>
<evidence type="ECO:0000269" key="5">
    <source>
    </source>
</evidence>
<evidence type="ECO:0000303" key="6">
    <source>
    </source>
</evidence>
<evidence type="ECO:0000305" key="7"/>
<accession>Q9BCU3</accession>
<accession>Q7JGS2</accession>
<accession>Q9BCU2</accession>
<accession>Q9BCU4</accession>
<protein>
    <recommendedName>
        <fullName>Major histocompatibility complex class I-related protein 1</fullName>
        <shortName>MHC class I-related protein 1</shortName>
    </recommendedName>
</protein>